<organism>
    <name type="scientific">Bungarus multicinctus</name>
    <name type="common">Many-banded krait</name>
    <dbReference type="NCBI Taxonomy" id="8616"/>
    <lineage>
        <taxon>Eukaryota</taxon>
        <taxon>Metazoa</taxon>
        <taxon>Chordata</taxon>
        <taxon>Craniata</taxon>
        <taxon>Vertebrata</taxon>
        <taxon>Euteleostomi</taxon>
        <taxon>Lepidosauria</taxon>
        <taxon>Squamata</taxon>
        <taxon>Bifurcata</taxon>
        <taxon>Unidentata</taxon>
        <taxon>Episquamata</taxon>
        <taxon>Toxicofera</taxon>
        <taxon>Serpentes</taxon>
        <taxon>Colubroidea</taxon>
        <taxon>Elapidae</taxon>
        <taxon>Bungarinae</taxon>
        <taxon>Bungarus</taxon>
    </lineage>
</organism>
<protein>
    <recommendedName>
        <fullName>Beta-bungarotoxin B chain-like</fullName>
        <shortName>BL1</shortName>
    </recommendedName>
</protein>
<keyword id="KW-1015">Disulfide bond</keyword>
<keyword id="KW-0872">Ion channel impairing toxin</keyword>
<keyword id="KW-0528">Neurotoxin</keyword>
<keyword id="KW-0632">Potassium channel impairing toxin</keyword>
<keyword id="KW-0638">Presynaptic neurotoxin</keyword>
<keyword id="KW-0964">Secreted</keyword>
<keyword id="KW-0732">Signal</keyword>
<keyword id="KW-0800">Toxin</keyword>
<proteinExistence type="inferred from homology"/>
<evidence type="ECO:0000250" key="1"/>
<reference key="1">
    <citation type="journal article" date="2000" name="Eur. J. Biochem.">
        <title>Genetic organization of A chain and B chain of beta-bungarotoxin from Taiwan banded krait (Bungarus multicinctus). A chain genes and B chain genes do not share a common origin.</title>
        <authorList>
            <person name="Wu P.-F."/>
            <person name="Chang L.-S."/>
        </authorList>
    </citation>
    <scope>NUCLEOTIDE SEQUENCE [GENOMIC DNA]</scope>
    <source>
        <tissue>Liver</tissue>
    </source>
</reference>
<sequence length="28" mass="2925">MSSGGLLLLLGLLTLCAELTPVSSKDRH</sequence>
<name>IVBL_BUNMU</name>
<accession>Q9PTA2</accession>
<dbReference type="EMBL" id="AJ251225">
    <property type="protein sequence ID" value="CAB62514.1"/>
    <property type="molecule type" value="Genomic_DNA"/>
</dbReference>
<dbReference type="SMR" id="Q9PTA2"/>
<dbReference type="GO" id="GO:0005576">
    <property type="term" value="C:extracellular region"/>
    <property type="evidence" value="ECO:0007669"/>
    <property type="project" value="UniProtKB-SubCell"/>
</dbReference>
<dbReference type="GO" id="GO:0015459">
    <property type="term" value="F:potassium channel regulator activity"/>
    <property type="evidence" value="ECO:0007669"/>
    <property type="project" value="UniProtKB-KW"/>
</dbReference>
<dbReference type="GO" id="GO:0090729">
    <property type="term" value="F:toxin activity"/>
    <property type="evidence" value="ECO:0007669"/>
    <property type="project" value="UniProtKB-KW"/>
</dbReference>
<feature type="signal peptide" evidence="1">
    <location>
        <begin position="1"/>
        <end position="24"/>
    </location>
</feature>
<feature type="chain" id="PRO_5000065750" description="Beta-bungarotoxin B chain-like">
    <location>
        <begin position="25"/>
        <end position="28" status="greater than"/>
    </location>
</feature>
<feature type="non-terminal residue">
    <location>
        <position position="28"/>
    </location>
</feature>
<comment type="function">
    <text evidence="1">Beta-1-bungarotoxin is a presynaptic neurotoxin of the venom. The B chain is homologous to venom basic protease inhibitors but has no protease inhibitor activity and blocks voltage-gated potassium channels (Kv) (By similarity).</text>
</comment>
<comment type="subunit">
    <text evidence="1">Heterodimer; disulfide-linked. The A chains have phospholipase A2 activity and the B chains show homology with the basic protease inhibitors (By similarity).</text>
</comment>
<comment type="subcellular location">
    <subcellularLocation>
        <location evidence="1">Secreted</location>
    </subcellularLocation>
</comment>
<comment type="tissue specificity">
    <text>Expressed by the venom gland.</text>
</comment>